<accession>M1GL27</accession>
<comment type="function">
    <text evidence="3">Involved in hypoxia tolerance.</text>
</comment>
<comment type="induction">
    <text evidence="3">By oxidation stress as a result of either short or long periods of environmental hypoxia.</text>
</comment>
<comment type="domain">
    <text evidence="4">Seems to have a cystatin/monellin-like domain.</text>
</comment>
<proteinExistence type="evidence at transcript level"/>
<reference evidence="5" key="1">
    <citation type="journal article" date="2013" name="Fish Shellfish Immunol.">
        <title>Molecular characterization and expression analysis of a novel cystatin-like gene in a hypoxia-tolerant Indian catfish, Clarias batrachus [Linnaeus, 1758].</title>
        <authorList>
            <person name="Mohindra V."/>
            <person name="Tripathi R.K."/>
            <person name="Singh A."/>
            <person name="Singh B."/>
        </authorList>
    </citation>
    <scope>NUCLEOTIDE SEQUENCE [MRNA]</scope>
    <scope>FUNCTION</scope>
    <scope>INDUCTION</scope>
    <scope>DOMAIN</scope>
    <scope>PHYLOGENETIC ANALYSIS</scope>
    <source>
        <tissue evidence="4">Head kidney</tissue>
    </source>
</reference>
<feature type="signal peptide" evidence="2">
    <location>
        <begin position="1"/>
        <end position="19"/>
    </location>
</feature>
<feature type="chain" id="PRO_0000434474" description="Cystatin-like protein" evidence="2">
    <location>
        <begin position="20"/>
        <end position="165"/>
    </location>
</feature>
<feature type="disulfide bond" evidence="1">
    <location>
        <begin position="80"/>
        <end position="92"/>
    </location>
</feature>
<feature type="disulfide bond" evidence="1">
    <location>
        <begin position="104"/>
        <end position="118"/>
    </location>
</feature>
<keyword id="KW-1015">Disulfide bond</keyword>
<keyword id="KW-0732">Signal</keyword>
<keyword id="KW-0346">Stress response</keyword>
<protein>
    <recommendedName>
        <fullName evidence="5">Cystatin-like protein</fullName>
    </recommendedName>
    <alternativeName>
        <fullName evidence="4">CbCystatin</fullName>
    </alternativeName>
</protein>
<dbReference type="EMBL" id="JX020765">
    <property type="protein sequence ID" value="AGD94422.1"/>
    <property type="molecule type" value="mRNA"/>
</dbReference>
<dbReference type="GO" id="GO:0033555">
    <property type="term" value="P:multicellular organismal response to stress"/>
    <property type="evidence" value="ECO:0000270"/>
    <property type="project" value="UniProtKB"/>
</dbReference>
<name>CYSLP_CLABA</name>
<sequence length="165" mass="18492">MDVALKLLLLAALTLLASAQTPIDYKDLSTTLQEHIDKALEEGNRKFGGRHHVALDSFVTPAVTRQSILNVNVFLKVTTCMKTRSYKHRPECNTQKRSTPKINCLVCKMKNGTELVHCARKIDILHGEHKEIRDNCDVTRIGVSSLMAQTMPDDYRKQVGCLGCI</sequence>
<evidence type="ECO:0000250" key="1">
    <source>
        <dbReference type="UniProtKB" id="Q8NFT8"/>
    </source>
</evidence>
<evidence type="ECO:0000255" key="2"/>
<evidence type="ECO:0000269" key="3">
    <source>
    </source>
</evidence>
<evidence type="ECO:0000303" key="4">
    <source>
    </source>
</evidence>
<evidence type="ECO:0000312" key="5">
    <source>
        <dbReference type="EMBL" id="AGD94422.1"/>
    </source>
</evidence>
<organism>
    <name type="scientific">Clarias batrachus</name>
    <name type="common">Walking catfish</name>
    <name type="synonym">Silurus batrachus</name>
    <dbReference type="NCBI Taxonomy" id="59899"/>
    <lineage>
        <taxon>Eukaryota</taxon>
        <taxon>Metazoa</taxon>
        <taxon>Chordata</taxon>
        <taxon>Craniata</taxon>
        <taxon>Vertebrata</taxon>
        <taxon>Euteleostomi</taxon>
        <taxon>Actinopterygii</taxon>
        <taxon>Neopterygii</taxon>
        <taxon>Teleostei</taxon>
        <taxon>Ostariophysi</taxon>
        <taxon>Siluriformes</taxon>
        <taxon>Clariidae</taxon>
        <taxon>Clarias</taxon>
    </lineage>
</organism>